<dbReference type="EMBL" id="J01261">
    <property type="status" value="NOT_ANNOTATED_CDS"/>
    <property type="molecule type" value="Genomic_DNA"/>
</dbReference>
<dbReference type="PIR" id="A04525">
    <property type="entry name" value="QQFB"/>
</dbReference>
<dbReference type="SMR" id="P03939"/>
<sequence>MHDHGFLQVTLPSPLPCASQPRKLSHRNLLHHRCVQQNQPYPSRRCHRLIQRQLTTIL</sequence>
<proteinExistence type="predicted"/>
<feature type="chain" id="PRO_0000066143" description="Uncharacterized basic polypeptide">
    <location>
        <begin position="1"/>
        <end position="58"/>
    </location>
</feature>
<organism>
    <name type="scientific">Phaseolus vulgaris</name>
    <name type="common">Kidney bean</name>
    <name type="synonym">French bean</name>
    <dbReference type="NCBI Taxonomy" id="3885"/>
    <lineage>
        <taxon>Eukaryota</taxon>
        <taxon>Viridiplantae</taxon>
        <taxon>Streptophyta</taxon>
        <taxon>Embryophyta</taxon>
        <taxon>Tracheophyta</taxon>
        <taxon>Spermatophyta</taxon>
        <taxon>Magnoliopsida</taxon>
        <taxon>eudicotyledons</taxon>
        <taxon>Gunneridae</taxon>
        <taxon>Pentapetalae</taxon>
        <taxon>rosids</taxon>
        <taxon>fabids</taxon>
        <taxon>Fabales</taxon>
        <taxon>Fabaceae</taxon>
        <taxon>Papilionoideae</taxon>
        <taxon>50 kb inversion clade</taxon>
        <taxon>NPAAA clade</taxon>
        <taxon>indigoferoid/millettioid clade</taxon>
        <taxon>Phaseoleae</taxon>
        <taxon>Phaseolus</taxon>
    </lineage>
</organism>
<reference key="1">
    <citation type="journal article" date="1982" name="Nucleic Acids Res.">
        <title>Molecular cloning of Phaseolus vulgaris lectin mRNA and use of cDNA as a probe to estimate lectin transcript levels in various tissues.</title>
        <authorList>
            <person name="Hoffman L.M."/>
            <person name="Ma Y."/>
            <person name="Barker R.F."/>
        </authorList>
    </citation>
    <scope>NUCLEOTIDE SEQUENCE [GENOMIC DNA]</scope>
    <source>
        <strain>cv. Tendergreen</strain>
    </source>
</reference>
<reference key="2">
    <citation type="journal article" date="1984" name="J. Mol. Appl. Genet.">
        <title>Structure of a chromosomal Phaseolus vulgaris lectin gene and its transcript.</title>
        <authorList>
            <person name="Hoffman L.M."/>
        </authorList>
    </citation>
    <scope>NUCLEOTIDE SEQUENCE [GENOMIC DNA]</scope>
    <source>
        <strain>cv. Tendergreen</strain>
    </source>
</reference>
<accession>P03939</accession>
<protein>
    <recommendedName>
        <fullName>Uncharacterized basic polypeptide</fullName>
    </recommendedName>
</protein>
<name>YBAS_PHAVU</name>